<sequence length="319" mass="34506">MDVMTLATIPSPPQGVWYLGPIPIRAYAMCIIAGIIVAIWLTRKRYAARGGNPEIVLDAAIVAVPAGIIGGRIYHVITDNQKYFCDTCNPVDAFKITNGGLGIWGAVILGGLAVAVFFRYKKLPLAPFADAVAPAVILAQGIGRLGNWFNQELYGAETTVPWALEIYYRVDENGKFAPVTGTSTGEVMATVHPTFLYELLWNLLIFALLMWADKRFKLGHGRVFALYVAGYTLGRFWIEQMRVDEATLIGGIRINTIVSAVVFAGAIIVFFLLKKGRETPEEVDPTFAASVAADAVASPDGKPLPKAGEGIDGETPSTR</sequence>
<evidence type="ECO:0000255" key="1">
    <source>
        <dbReference type="HAMAP-Rule" id="MF_01147"/>
    </source>
</evidence>
<evidence type="ECO:0000256" key="2">
    <source>
        <dbReference type="SAM" id="MobiDB-lite"/>
    </source>
</evidence>
<name>LGT_CORGB</name>
<accession>A4QFF5</accession>
<feature type="chain" id="PRO_1000053420" description="Phosphatidylglycerol--prolipoprotein diacylglyceryl transferase">
    <location>
        <begin position="1"/>
        <end position="319"/>
    </location>
</feature>
<feature type="transmembrane region" description="Helical" evidence="1">
    <location>
        <begin position="21"/>
        <end position="41"/>
    </location>
</feature>
<feature type="transmembrane region" description="Helical" evidence="1">
    <location>
        <begin position="50"/>
        <end position="70"/>
    </location>
</feature>
<feature type="transmembrane region" description="Helical" evidence="1">
    <location>
        <begin position="98"/>
        <end position="118"/>
    </location>
</feature>
<feature type="transmembrane region" description="Helical" evidence="1">
    <location>
        <begin position="191"/>
        <end position="211"/>
    </location>
</feature>
<feature type="transmembrane region" description="Helical" evidence="1">
    <location>
        <begin position="254"/>
        <end position="274"/>
    </location>
</feature>
<feature type="region of interest" description="Disordered" evidence="2">
    <location>
        <begin position="295"/>
        <end position="319"/>
    </location>
</feature>
<feature type="binding site" evidence="1">
    <location>
        <position position="144"/>
    </location>
    <ligand>
        <name>a 1,2-diacyl-sn-glycero-3-phospho-(1'-sn-glycerol)</name>
        <dbReference type="ChEBI" id="CHEBI:64716"/>
    </ligand>
</feature>
<reference key="1">
    <citation type="journal article" date="2007" name="Microbiology">
        <title>Comparative analysis of the Corynebacterium glutamicum group and complete genome sequence of strain R.</title>
        <authorList>
            <person name="Yukawa H."/>
            <person name="Omumasaba C.A."/>
            <person name="Nonaka H."/>
            <person name="Kos P."/>
            <person name="Okai N."/>
            <person name="Suzuki N."/>
            <person name="Suda M."/>
            <person name="Tsuge Y."/>
            <person name="Watanabe J."/>
            <person name="Ikeda Y."/>
            <person name="Vertes A.A."/>
            <person name="Inui M."/>
        </authorList>
    </citation>
    <scope>NUCLEOTIDE SEQUENCE [LARGE SCALE GENOMIC DNA]</scope>
    <source>
        <strain>R</strain>
    </source>
</reference>
<keyword id="KW-1003">Cell membrane</keyword>
<keyword id="KW-0472">Membrane</keyword>
<keyword id="KW-0808">Transferase</keyword>
<keyword id="KW-0812">Transmembrane</keyword>
<keyword id="KW-1133">Transmembrane helix</keyword>
<proteinExistence type="inferred from homology"/>
<organism>
    <name type="scientific">Corynebacterium glutamicum (strain R)</name>
    <dbReference type="NCBI Taxonomy" id="340322"/>
    <lineage>
        <taxon>Bacteria</taxon>
        <taxon>Bacillati</taxon>
        <taxon>Actinomycetota</taxon>
        <taxon>Actinomycetes</taxon>
        <taxon>Mycobacteriales</taxon>
        <taxon>Corynebacteriaceae</taxon>
        <taxon>Corynebacterium</taxon>
    </lineage>
</organism>
<dbReference type="EC" id="2.5.1.145" evidence="1"/>
<dbReference type="EMBL" id="AP009044">
    <property type="protein sequence ID" value="BAF54971.1"/>
    <property type="molecule type" value="Genomic_DNA"/>
</dbReference>
<dbReference type="SMR" id="A4QFF5"/>
<dbReference type="KEGG" id="cgt:cgR_1974"/>
<dbReference type="HOGENOM" id="CLU_013386_2_0_11"/>
<dbReference type="PhylomeDB" id="A4QFF5"/>
<dbReference type="UniPathway" id="UPA00664"/>
<dbReference type="Proteomes" id="UP000006698">
    <property type="component" value="Chromosome"/>
</dbReference>
<dbReference type="GO" id="GO:0005886">
    <property type="term" value="C:plasma membrane"/>
    <property type="evidence" value="ECO:0007669"/>
    <property type="project" value="UniProtKB-SubCell"/>
</dbReference>
<dbReference type="GO" id="GO:0008961">
    <property type="term" value="F:phosphatidylglycerol-prolipoprotein diacylglyceryl transferase activity"/>
    <property type="evidence" value="ECO:0007669"/>
    <property type="project" value="UniProtKB-UniRule"/>
</dbReference>
<dbReference type="GO" id="GO:0042158">
    <property type="term" value="P:lipoprotein biosynthetic process"/>
    <property type="evidence" value="ECO:0007669"/>
    <property type="project" value="UniProtKB-UniRule"/>
</dbReference>
<dbReference type="HAMAP" id="MF_01147">
    <property type="entry name" value="Lgt"/>
    <property type="match status" value="1"/>
</dbReference>
<dbReference type="InterPro" id="IPR001640">
    <property type="entry name" value="Lgt"/>
</dbReference>
<dbReference type="NCBIfam" id="TIGR00544">
    <property type="entry name" value="lgt"/>
    <property type="match status" value="1"/>
</dbReference>
<dbReference type="PANTHER" id="PTHR30589:SF0">
    <property type="entry name" value="PHOSPHATIDYLGLYCEROL--PROLIPOPROTEIN DIACYLGLYCERYL TRANSFERASE"/>
    <property type="match status" value="1"/>
</dbReference>
<dbReference type="PANTHER" id="PTHR30589">
    <property type="entry name" value="PROLIPOPROTEIN DIACYLGLYCERYL TRANSFERASE"/>
    <property type="match status" value="1"/>
</dbReference>
<dbReference type="Pfam" id="PF01790">
    <property type="entry name" value="LGT"/>
    <property type="match status" value="1"/>
</dbReference>
<dbReference type="PROSITE" id="PS01311">
    <property type="entry name" value="LGT"/>
    <property type="match status" value="1"/>
</dbReference>
<comment type="function">
    <text evidence="1">Catalyzes the transfer of the diacylglyceryl group from phosphatidylglycerol to the sulfhydryl group of the N-terminal cysteine of a prolipoprotein, the first step in the formation of mature lipoproteins.</text>
</comment>
<comment type="catalytic activity">
    <reaction evidence="1">
        <text>L-cysteinyl-[prolipoprotein] + a 1,2-diacyl-sn-glycero-3-phospho-(1'-sn-glycerol) = an S-1,2-diacyl-sn-glyceryl-L-cysteinyl-[prolipoprotein] + sn-glycerol 1-phosphate + H(+)</text>
        <dbReference type="Rhea" id="RHEA:56712"/>
        <dbReference type="Rhea" id="RHEA-COMP:14679"/>
        <dbReference type="Rhea" id="RHEA-COMP:14680"/>
        <dbReference type="ChEBI" id="CHEBI:15378"/>
        <dbReference type="ChEBI" id="CHEBI:29950"/>
        <dbReference type="ChEBI" id="CHEBI:57685"/>
        <dbReference type="ChEBI" id="CHEBI:64716"/>
        <dbReference type="ChEBI" id="CHEBI:140658"/>
        <dbReference type="EC" id="2.5.1.145"/>
    </reaction>
</comment>
<comment type="pathway">
    <text evidence="1">Protein modification; lipoprotein biosynthesis (diacylglyceryl transfer).</text>
</comment>
<comment type="subcellular location">
    <subcellularLocation>
        <location evidence="1">Cell membrane</location>
        <topology evidence="1">Multi-pass membrane protein</topology>
    </subcellularLocation>
</comment>
<comment type="similarity">
    <text evidence="1">Belongs to the Lgt family.</text>
</comment>
<protein>
    <recommendedName>
        <fullName evidence="1">Phosphatidylglycerol--prolipoprotein diacylglyceryl transferase</fullName>
        <ecNumber evidence="1">2.5.1.145</ecNumber>
    </recommendedName>
</protein>
<gene>
    <name evidence="1" type="primary">lgt</name>
    <name type="ordered locus">cgR_1974</name>
</gene>